<protein>
    <recommendedName>
        <fullName>Ethylmalonyl-CoA decarboxylase</fullName>
        <ecNumber evidence="1">4.1.1.94</ecNumber>
    </recommendedName>
    <alternativeName>
        <fullName>Enoyl-CoA hydratase domain-containing protein 1</fullName>
    </alternativeName>
    <alternativeName>
        <fullName>Methylmalonyl-CoA decarboxylase</fullName>
        <shortName>MMCD</shortName>
    </alternativeName>
</protein>
<feature type="chain" id="PRO_0000416272" description="Ethylmalonyl-CoA decarboxylase">
    <location>
        <begin position="1"/>
        <end position="302"/>
    </location>
</feature>
<sequence>MSMWGAVRCRLIQTRSAVRKILQQNRAFCSGSSVGIREKLLAFPGGSVELQKLQESGIAVLTVSNPPARMNAFSGCMMLELEQRVNELEIWTEGKAVIVQGAAGNFCSGSDLNAVRAIANPHDGMKMCEFMQNTLARLLRLPLISVALVEGRALGGGAELTTACDFRLMTSDAVIQFVHKHMGLVPGWGGAARLVGIIGSRNALKLLSGARKVDPDYGKQMGLVDEVLQCSSGEGKALAHAEHWIAPFIKGPAPVIQAIKKVVVSGRELSLDEALKCERSVFGTVWGGPANLEALASKPKHK</sequence>
<accession>F1R6N4</accession>
<dbReference type="EC" id="4.1.1.94" evidence="1"/>
<dbReference type="EMBL" id="AL929535">
    <property type="status" value="NOT_ANNOTATED_CDS"/>
    <property type="molecule type" value="Genomic_DNA"/>
</dbReference>
<dbReference type="SMR" id="F1R6N4"/>
<dbReference type="FunCoup" id="F1R6N4">
    <property type="interactions" value="380"/>
</dbReference>
<dbReference type="PaxDb" id="7955-ENSDARP00000060189"/>
<dbReference type="AGR" id="ZFIN:ZDB-GENE-050522-370"/>
<dbReference type="ZFIN" id="ZDB-GENE-050522-370">
    <property type="gene designation" value="echdc1"/>
</dbReference>
<dbReference type="eggNOG" id="KOG1680">
    <property type="taxonomic scope" value="Eukaryota"/>
</dbReference>
<dbReference type="InParanoid" id="F1R6N4"/>
<dbReference type="PRO" id="PR:F1R6N4"/>
<dbReference type="Proteomes" id="UP000000437">
    <property type="component" value="Unplaced"/>
</dbReference>
<dbReference type="GO" id="GO:0005829">
    <property type="term" value="C:cytosol"/>
    <property type="evidence" value="ECO:0000250"/>
    <property type="project" value="UniProtKB"/>
</dbReference>
<dbReference type="GO" id="GO:0016831">
    <property type="term" value="F:carboxy-lyase activity"/>
    <property type="evidence" value="ECO:0000250"/>
    <property type="project" value="UniProtKB"/>
</dbReference>
<dbReference type="GO" id="GO:0004492">
    <property type="term" value="F:methyl/ethyl malonyl-CoA decarboxylase activity"/>
    <property type="evidence" value="ECO:0007669"/>
    <property type="project" value="UniProtKB-EC"/>
</dbReference>
<dbReference type="GO" id="GO:0006635">
    <property type="term" value="P:fatty acid beta-oxidation"/>
    <property type="evidence" value="ECO:0000318"/>
    <property type="project" value="GO_Central"/>
</dbReference>
<dbReference type="CDD" id="cd06558">
    <property type="entry name" value="crotonase-like"/>
    <property type="match status" value="1"/>
</dbReference>
<dbReference type="FunFam" id="3.90.226.10:FF:000040">
    <property type="entry name" value="Ethylmalonyl-CoA decarboxylase 1"/>
    <property type="match status" value="1"/>
</dbReference>
<dbReference type="Gene3D" id="3.90.226.10">
    <property type="entry name" value="2-enoyl-CoA Hydratase, Chain A, domain 1"/>
    <property type="match status" value="1"/>
</dbReference>
<dbReference type="InterPro" id="IPR029045">
    <property type="entry name" value="ClpP/crotonase-like_dom_sf"/>
</dbReference>
<dbReference type="InterPro" id="IPR018376">
    <property type="entry name" value="Enoyl-CoA_hyd/isom_CS"/>
</dbReference>
<dbReference type="InterPro" id="IPR001753">
    <property type="entry name" value="Enoyl-CoA_hydra/iso"/>
</dbReference>
<dbReference type="PANTHER" id="PTHR11941">
    <property type="entry name" value="ENOYL-COA HYDRATASE-RELATED"/>
    <property type="match status" value="1"/>
</dbReference>
<dbReference type="PANTHER" id="PTHR11941:SF27">
    <property type="entry name" value="ETHYLMALONYL-COA DECARBOXYLASE"/>
    <property type="match status" value="1"/>
</dbReference>
<dbReference type="Pfam" id="PF00378">
    <property type="entry name" value="ECH_1"/>
    <property type="match status" value="1"/>
</dbReference>
<dbReference type="SUPFAM" id="SSF52096">
    <property type="entry name" value="ClpP/crotonase"/>
    <property type="match status" value="1"/>
</dbReference>
<dbReference type="PROSITE" id="PS00166">
    <property type="entry name" value="ENOYL_COA_HYDRATASE"/>
    <property type="match status" value="1"/>
</dbReference>
<name>ECHD1_DANRE</name>
<reference key="1">
    <citation type="journal article" date="2013" name="Nature">
        <title>The zebrafish reference genome sequence and its relationship to the human genome.</title>
        <authorList>
            <person name="Howe K."/>
            <person name="Clark M.D."/>
            <person name="Torroja C.F."/>
            <person name="Torrance J."/>
            <person name="Berthelot C."/>
            <person name="Muffato M."/>
            <person name="Collins J.E."/>
            <person name="Humphray S."/>
            <person name="McLaren K."/>
            <person name="Matthews L."/>
            <person name="McLaren S."/>
            <person name="Sealy I."/>
            <person name="Caccamo M."/>
            <person name="Churcher C."/>
            <person name="Scott C."/>
            <person name="Barrett J.C."/>
            <person name="Koch R."/>
            <person name="Rauch G.J."/>
            <person name="White S."/>
            <person name="Chow W."/>
            <person name="Kilian B."/>
            <person name="Quintais L.T."/>
            <person name="Guerra-Assuncao J.A."/>
            <person name="Zhou Y."/>
            <person name="Gu Y."/>
            <person name="Yen J."/>
            <person name="Vogel J.H."/>
            <person name="Eyre T."/>
            <person name="Redmond S."/>
            <person name="Banerjee R."/>
            <person name="Chi J."/>
            <person name="Fu B."/>
            <person name="Langley E."/>
            <person name="Maguire S.F."/>
            <person name="Laird G.K."/>
            <person name="Lloyd D."/>
            <person name="Kenyon E."/>
            <person name="Donaldson S."/>
            <person name="Sehra H."/>
            <person name="Almeida-King J."/>
            <person name="Loveland J."/>
            <person name="Trevanion S."/>
            <person name="Jones M."/>
            <person name="Quail M."/>
            <person name="Willey D."/>
            <person name="Hunt A."/>
            <person name="Burton J."/>
            <person name="Sims S."/>
            <person name="McLay K."/>
            <person name="Plumb B."/>
            <person name="Davis J."/>
            <person name="Clee C."/>
            <person name="Oliver K."/>
            <person name="Clark R."/>
            <person name="Riddle C."/>
            <person name="Elliot D."/>
            <person name="Threadgold G."/>
            <person name="Harden G."/>
            <person name="Ware D."/>
            <person name="Begum S."/>
            <person name="Mortimore B."/>
            <person name="Kerry G."/>
            <person name="Heath P."/>
            <person name="Phillimore B."/>
            <person name="Tracey A."/>
            <person name="Corby N."/>
            <person name="Dunn M."/>
            <person name="Johnson C."/>
            <person name="Wood J."/>
            <person name="Clark S."/>
            <person name="Pelan S."/>
            <person name="Griffiths G."/>
            <person name="Smith M."/>
            <person name="Glithero R."/>
            <person name="Howden P."/>
            <person name="Barker N."/>
            <person name="Lloyd C."/>
            <person name="Stevens C."/>
            <person name="Harley J."/>
            <person name="Holt K."/>
            <person name="Panagiotidis G."/>
            <person name="Lovell J."/>
            <person name="Beasley H."/>
            <person name="Henderson C."/>
            <person name="Gordon D."/>
            <person name="Auger K."/>
            <person name="Wright D."/>
            <person name="Collins J."/>
            <person name="Raisen C."/>
            <person name="Dyer L."/>
            <person name="Leung K."/>
            <person name="Robertson L."/>
            <person name="Ambridge K."/>
            <person name="Leongamornlert D."/>
            <person name="McGuire S."/>
            <person name="Gilderthorp R."/>
            <person name="Griffiths C."/>
            <person name="Manthravadi D."/>
            <person name="Nichol S."/>
            <person name="Barker G."/>
            <person name="Whitehead S."/>
            <person name="Kay M."/>
            <person name="Brown J."/>
            <person name="Murnane C."/>
            <person name="Gray E."/>
            <person name="Humphries M."/>
            <person name="Sycamore N."/>
            <person name="Barker D."/>
            <person name="Saunders D."/>
            <person name="Wallis J."/>
            <person name="Babbage A."/>
            <person name="Hammond S."/>
            <person name="Mashreghi-Mohammadi M."/>
            <person name="Barr L."/>
            <person name="Martin S."/>
            <person name="Wray P."/>
            <person name="Ellington A."/>
            <person name="Matthews N."/>
            <person name="Ellwood M."/>
            <person name="Woodmansey R."/>
            <person name="Clark G."/>
            <person name="Cooper J."/>
            <person name="Tromans A."/>
            <person name="Grafham D."/>
            <person name="Skuce C."/>
            <person name="Pandian R."/>
            <person name="Andrews R."/>
            <person name="Harrison E."/>
            <person name="Kimberley A."/>
            <person name="Garnett J."/>
            <person name="Fosker N."/>
            <person name="Hall R."/>
            <person name="Garner P."/>
            <person name="Kelly D."/>
            <person name="Bird C."/>
            <person name="Palmer S."/>
            <person name="Gehring I."/>
            <person name="Berger A."/>
            <person name="Dooley C.M."/>
            <person name="Ersan-Urun Z."/>
            <person name="Eser C."/>
            <person name="Geiger H."/>
            <person name="Geisler M."/>
            <person name="Karotki L."/>
            <person name="Kirn A."/>
            <person name="Konantz J."/>
            <person name="Konantz M."/>
            <person name="Oberlander M."/>
            <person name="Rudolph-Geiger S."/>
            <person name="Teucke M."/>
            <person name="Lanz C."/>
            <person name="Raddatz G."/>
            <person name="Osoegawa K."/>
            <person name="Zhu B."/>
            <person name="Rapp A."/>
            <person name="Widaa S."/>
            <person name="Langford C."/>
            <person name="Yang F."/>
            <person name="Schuster S.C."/>
            <person name="Carter N.P."/>
            <person name="Harrow J."/>
            <person name="Ning Z."/>
            <person name="Herrero J."/>
            <person name="Searle S.M."/>
            <person name="Enright A."/>
            <person name="Geisler R."/>
            <person name="Plasterk R.H."/>
            <person name="Lee C."/>
            <person name="Westerfield M."/>
            <person name="de Jong P.J."/>
            <person name="Zon L.I."/>
            <person name="Postlethwait J.H."/>
            <person name="Nusslein-Volhard C."/>
            <person name="Hubbard T.J."/>
            <person name="Roest Crollius H."/>
            <person name="Rogers J."/>
            <person name="Stemple D.L."/>
        </authorList>
    </citation>
    <scope>NUCLEOTIDE SEQUENCE [LARGE SCALE GENOMIC DNA]</scope>
    <source>
        <strain>Tuebingen</strain>
    </source>
</reference>
<organism>
    <name type="scientific">Danio rerio</name>
    <name type="common">Zebrafish</name>
    <name type="synonym">Brachydanio rerio</name>
    <dbReference type="NCBI Taxonomy" id="7955"/>
    <lineage>
        <taxon>Eukaryota</taxon>
        <taxon>Metazoa</taxon>
        <taxon>Chordata</taxon>
        <taxon>Craniata</taxon>
        <taxon>Vertebrata</taxon>
        <taxon>Euteleostomi</taxon>
        <taxon>Actinopterygii</taxon>
        <taxon>Neopterygii</taxon>
        <taxon>Teleostei</taxon>
        <taxon>Ostariophysi</taxon>
        <taxon>Cypriniformes</taxon>
        <taxon>Danionidae</taxon>
        <taxon>Danioninae</taxon>
        <taxon>Danio</taxon>
    </lineage>
</organism>
<keyword id="KW-0963">Cytoplasm</keyword>
<keyword id="KW-0456">Lyase</keyword>
<keyword id="KW-1185">Reference proteome</keyword>
<gene>
    <name type="primary">echdc1</name>
</gene>
<comment type="function">
    <text evidence="1">Decarboxylates ethylmalonyl-CoA, a potentially toxic metabolite, to form butyryl-CoA, suggesting it might be involved in metabolite proofreading. Acts preferentially on (S)-ethylmalonyl-CoA but also has some activity on the (R)-isomer. Also has methylmalonyl-CoA decarboxylase activity at lower level.</text>
</comment>
<comment type="catalytic activity">
    <reaction evidence="1">
        <text>(2S)-ethylmalonyl-CoA + H(+) = butanoyl-CoA + CO2</text>
        <dbReference type="Rhea" id="RHEA:32131"/>
        <dbReference type="ChEBI" id="CHEBI:15378"/>
        <dbReference type="ChEBI" id="CHEBI:16526"/>
        <dbReference type="ChEBI" id="CHEBI:57371"/>
        <dbReference type="ChEBI" id="CHEBI:60909"/>
        <dbReference type="EC" id="4.1.1.94"/>
    </reaction>
    <physiologicalReaction direction="left-to-right" evidence="1">
        <dbReference type="Rhea" id="RHEA:32132"/>
    </physiologicalReaction>
</comment>
<comment type="catalytic activity">
    <reaction evidence="1">
        <text>(S)-methylmalonyl-CoA + H(+) = propanoyl-CoA + CO2</text>
        <dbReference type="Rhea" id="RHEA:61340"/>
        <dbReference type="ChEBI" id="CHEBI:15378"/>
        <dbReference type="ChEBI" id="CHEBI:16526"/>
        <dbReference type="ChEBI" id="CHEBI:57327"/>
        <dbReference type="ChEBI" id="CHEBI:57392"/>
        <dbReference type="EC" id="4.1.1.94"/>
    </reaction>
    <physiologicalReaction direction="left-to-right" evidence="1">
        <dbReference type="Rhea" id="RHEA:61341"/>
    </physiologicalReaction>
</comment>
<comment type="catalytic activity">
    <reaction evidence="1">
        <text>(2R)-ethylmalonyl-CoA + H(+) = butanoyl-CoA + CO2</text>
        <dbReference type="Rhea" id="RHEA:59540"/>
        <dbReference type="ChEBI" id="CHEBI:15378"/>
        <dbReference type="ChEBI" id="CHEBI:16526"/>
        <dbReference type="ChEBI" id="CHEBI:57371"/>
        <dbReference type="ChEBI" id="CHEBI:85316"/>
        <dbReference type="EC" id="4.1.1.94"/>
    </reaction>
    <physiologicalReaction direction="left-to-right" evidence="1">
        <dbReference type="Rhea" id="RHEA:59541"/>
    </physiologicalReaction>
</comment>
<comment type="subcellular location">
    <subcellularLocation>
        <location evidence="1">Cytoplasm</location>
        <location evidence="1">Cytosol</location>
    </subcellularLocation>
</comment>
<comment type="similarity">
    <text evidence="2">Belongs to the enoyl-CoA hydratase/isomerase family.</text>
</comment>
<proteinExistence type="inferred from homology"/>
<evidence type="ECO:0000250" key="1">
    <source>
        <dbReference type="UniProtKB" id="Q9D9V3"/>
    </source>
</evidence>
<evidence type="ECO:0000305" key="2"/>